<name>TOM2A_ARATH</name>
<comment type="function">
    <text evidence="3 5 6">Necessary for the efficient intracellular multiplication of tobamoviruses, being a component of the replication complex.</text>
</comment>
<comment type="subunit">
    <text evidence="3">Homodimer. Constituent of tobamovirus replication complex. Interacts with TOM1.</text>
</comment>
<comment type="subcellular location">
    <subcellularLocation>
        <location evidence="4">Vacuole membrane</location>
        <topology evidence="1">Multi-pass membrane protein</topology>
    </subcellularLocation>
</comment>
<comment type="tissue specificity">
    <text evidence="5">Expressed in rosette leaves.</text>
</comment>
<comment type="disruption phenotype">
    <text evidence="3 5 6">Reduced efficiency of intracellular multiplication of tobamoviruses (e.g. crucifer strain TMV-Cg), characterized by a reduced amplification of TMV-related RNAs.</text>
</comment>
<comment type="similarity">
    <text evidence="7">Belongs to the tetraspanin (TM4SF) family.</text>
</comment>
<comment type="sequence caution" evidence="7">
    <conflict type="erroneous gene model prediction">
        <sequence resource="EMBL-CDS" id="AAF81337"/>
    </conflict>
</comment>
<accession>Q9C5W7</accession>
<accession>Q56Z79</accession>
<accession>Q9LQL8</accession>
<dbReference type="EMBL" id="AB085684">
    <property type="protein sequence ID" value="BAC24019.1"/>
    <property type="molecule type" value="mRNA"/>
</dbReference>
<dbReference type="EMBL" id="AC007767">
    <property type="protein sequence ID" value="AAF81337.1"/>
    <property type="status" value="ALT_SEQ"/>
    <property type="molecule type" value="Genomic_DNA"/>
</dbReference>
<dbReference type="EMBL" id="CP002684">
    <property type="protein sequence ID" value="AEE31476.1"/>
    <property type="molecule type" value="Genomic_DNA"/>
</dbReference>
<dbReference type="EMBL" id="CP002684">
    <property type="protein sequence ID" value="AEE31477.1"/>
    <property type="molecule type" value="Genomic_DNA"/>
</dbReference>
<dbReference type="EMBL" id="CP002684">
    <property type="protein sequence ID" value="AEE31478.1"/>
    <property type="molecule type" value="Genomic_DNA"/>
</dbReference>
<dbReference type="EMBL" id="AF334723">
    <property type="protein sequence ID" value="AAG50101.1"/>
    <property type="molecule type" value="mRNA"/>
</dbReference>
<dbReference type="EMBL" id="AF385687">
    <property type="protein sequence ID" value="AAK60280.1"/>
    <property type="molecule type" value="mRNA"/>
</dbReference>
<dbReference type="EMBL" id="AY088560">
    <property type="protein sequence ID" value="AAM66092.1"/>
    <property type="molecule type" value="mRNA"/>
</dbReference>
<dbReference type="EMBL" id="AK221090">
    <property type="protein sequence ID" value="BAD94952.1"/>
    <property type="molecule type" value="mRNA"/>
</dbReference>
<dbReference type="PIR" id="A86449">
    <property type="entry name" value="A86449"/>
</dbReference>
<dbReference type="RefSeq" id="NP_001031127.1">
    <property type="nucleotide sequence ID" value="NM_001036050.2"/>
</dbReference>
<dbReference type="RefSeq" id="NP_564399.1">
    <property type="nucleotide sequence ID" value="NM_102974.5"/>
</dbReference>
<dbReference type="RefSeq" id="NP_973952.1">
    <property type="nucleotide sequence ID" value="NM_202223.3"/>
</dbReference>
<dbReference type="BioGRID" id="25367">
    <property type="interactions" value="3"/>
</dbReference>
<dbReference type="FunCoup" id="Q9C5W7">
    <property type="interactions" value="922"/>
</dbReference>
<dbReference type="IntAct" id="Q9C5W7">
    <property type="interactions" value="1"/>
</dbReference>
<dbReference type="STRING" id="3702.Q9C5W7"/>
<dbReference type="iPTMnet" id="Q9C5W7"/>
<dbReference type="SwissPalm" id="Q9C5W7"/>
<dbReference type="PaxDb" id="3702-AT1G32400.3"/>
<dbReference type="ProMEX" id="Q9C5W7"/>
<dbReference type="ProteomicsDB" id="234322"/>
<dbReference type="EnsemblPlants" id="AT1G32400.1">
    <property type="protein sequence ID" value="AT1G32400.1"/>
    <property type="gene ID" value="AT1G32400"/>
</dbReference>
<dbReference type="EnsemblPlants" id="AT1G32400.2">
    <property type="protein sequence ID" value="AT1G32400.2"/>
    <property type="gene ID" value="AT1G32400"/>
</dbReference>
<dbReference type="EnsemblPlants" id="AT1G32400.3">
    <property type="protein sequence ID" value="AT1G32400.3"/>
    <property type="gene ID" value="AT1G32400"/>
</dbReference>
<dbReference type="GeneID" id="840133"/>
<dbReference type="Gramene" id="AT1G32400.1">
    <property type="protein sequence ID" value="AT1G32400.1"/>
    <property type="gene ID" value="AT1G32400"/>
</dbReference>
<dbReference type="Gramene" id="AT1G32400.2">
    <property type="protein sequence ID" value="AT1G32400.2"/>
    <property type="gene ID" value="AT1G32400"/>
</dbReference>
<dbReference type="Gramene" id="AT1G32400.3">
    <property type="protein sequence ID" value="AT1G32400.3"/>
    <property type="gene ID" value="AT1G32400"/>
</dbReference>
<dbReference type="KEGG" id="ath:AT1G32400"/>
<dbReference type="Araport" id="AT1G32400"/>
<dbReference type="TAIR" id="AT1G32400">
    <property type="gene designation" value="TOM2A"/>
</dbReference>
<dbReference type="eggNOG" id="ENOG502QRDH">
    <property type="taxonomic scope" value="Eukaryota"/>
</dbReference>
<dbReference type="HOGENOM" id="CLU_055730_0_0_1"/>
<dbReference type="InParanoid" id="Q9C5W7"/>
<dbReference type="OMA" id="NWKIVRW"/>
<dbReference type="PhylomeDB" id="Q9C5W7"/>
<dbReference type="PRO" id="PR:Q9C5W7"/>
<dbReference type="Proteomes" id="UP000006548">
    <property type="component" value="Chromosome 1"/>
</dbReference>
<dbReference type="ExpressionAtlas" id="Q9C5W7">
    <property type="expression patterns" value="baseline and differential"/>
</dbReference>
<dbReference type="GO" id="GO:0005794">
    <property type="term" value="C:Golgi apparatus"/>
    <property type="evidence" value="ECO:0007005"/>
    <property type="project" value="TAIR"/>
</dbReference>
<dbReference type="GO" id="GO:0016020">
    <property type="term" value="C:membrane"/>
    <property type="evidence" value="ECO:0000250"/>
    <property type="project" value="TAIR"/>
</dbReference>
<dbReference type="GO" id="GO:0005634">
    <property type="term" value="C:nucleus"/>
    <property type="evidence" value="ECO:0007005"/>
    <property type="project" value="TAIR"/>
</dbReference>
<dbReference type="GO" id="GO:0000325">
    <property type="term" value="C:plant-type vacuole"/>
    <property type="evidence" value="ECO:0007005"/>
    <property type="project" value="TAIR"/>
</dbReference>
<dbReference type="GO" id="GO:0009705">
    <property type="term" value="C:plant-type vacuole membrane"/>
    <property type="evidence" value="ECO:0000314"/>
    <property type="project" value="UniProtKB"/>
</dbReference>
<dbReference type="GO" id="GO:0009506">
    <property type="term" value="C:plasmodesma"/>
    <property type="evidence" value="ECO:0007005"/>
    <property type="project" value="TAIR"/>
</dbReference>
<dbReference type="GO" id="GO:0046786">
    <property type="term" value="P:viral replication complex formation and maintenance"/>
    <property type="evidence" value="ECO:0000315"/>
    <property type="project" value="TAIR"/>
</dbReference>
<dbReference type="InterPro" id="IPR018499">
    <property type="entry name" value="Tetraspanin/Peripherin"/>
</dbReference>
<dbReference type="PANTHER" id="PTHR19282">
    <property type="entry name" value="TETRASPANIN"/>
    <property type="match status" value="1"/>
</dbReference>
<dbReference type="PANTHER" id="PTHR19282:SF518">
    <property type="entry name" value="TOBAMOVIRUS MULTIPLICATION PROTEIN 2A"/>
    <property type="match status" value="1"/>
</dbReference>
<dbReference type="Pfam" id="PF00335">
    <property type="entry name" value="Tetraspanin"/>
    <property type="match status" value="1"/>
</dbReference>
<gene>
    <name type="primary">TOM2A</name>
    <name type="ordered locus">At1g32400</name>
    <name type="ORF">F5D14.22</name>
</gene>
<reference key="1">
    <citation type="journal article" date="2003" name="EMBO J.">
        <title>Arabidopsis TOBAMOVIRUS MULTIPLICATION (TOM) 2 locus encodes a transmembrane protein that interacts with TOM1.</title>
        <authorList>
            <person name="Tsujimoto Y."/>
            <person name="Numaga T."/>
            <person name="Ohshima K."/>
            <person name="Yano M.A."/>
            <person name="Ohsawa R."/>
            <person name="Goto D.B."/>
            <person name="Naito S."/>
            <person name="Ishikawa M."/>
        </authorList>
    </citation>
    <scope>NUCLEOTIDE SEQUENCE [MRNA]</scope>
    <scope>FUNCTION</scope>
    <scope>DISRUPTION PHENOTYPE</scope>
    <scope>INTERACTION WITH TOM1</scope>
    <scope>SUBUNIT</scope>
    <scope>TOPOLOGY</scope>
</reference>
<reference key="2">
    <citation type="journal article" date="2000" name="Nature">
        <title>Sequence and analysis of chromosome 1 of the plant Arabidopsis thaliana.</title>
        <authorList>
            <person name="Theologis A."/>
            <person name="Ecker J.R."/>
            <person name="Palm C.J."/>
            <person name="Federspiel N.A."/>
            <person name="Kaul S."/>
            <person name="White O."/>
            <person name="Alonso J."/>
            <person name="Altafi H."/>
            <person name="Araujo R."/>
            <person name="Bowman C.L."/>
            <person name="Brooks S.Y."/>
            <person name="Buehler E."/>
            <person name="Chan A."/>
            <person name="Chao Q."/>
            <person name="Chen H."/>
            <person name="Cheuk R.F."/>
            <person name="Chin C.W."/>
            <person name="Chung M.K."/>
            <person name="Conn L."/>
            <person name="Conway A.B."/>
            <person name="Conway A.R."/>
            <person name="Creasy T.H."/>
            <person name="Dewar K."/>
            <person name="Dunn P."/>
            <person name="Etgu P."/>
            <person name="Feldblyum T.V."/>
            <person name="Feng J.-D."/>
            <person name="Fong B."/>
            <person name="Fujii C.Y."/>
            <person name="Gill J.E."/>
            <person name="Goldsmith A.D."/>
            <person name="Haas B."/>
            <person name="Hansen N.F."/>
            <person name="Hughes B."/>
            <person name="Huizar L."/>
            <person name="Hunter J.L."/>
            <person name="Jenkins J."/>
            <person name="Johnson-Hopson C."/>
            <person name="Khan S."/>
            <person name="Khaykin E."/>
            <person name="Kim C.J."/>
            <person name="Koo H.L."/>
            <person name="Kremenetskaia I."/>
            <person name="Kurtz D.B."/>
            <person name="Kwan A."/>
            <person name="Lam B."/>
            <person name="Langin-Hooper S."/>
            <person name="Lee A."/>
            <person name="Lee J.M."/>
            <person name="Lenz C.A."/>
            <person name="Li J.H."/>
            <person name="Li Y.-P."/>
            <person name="Lin X."/>
            <person name="Liu S.X."/>
            <person name="Liu Z.A."/>
            <person name="Luros J.S."/>
            <person name="Maiti R."/>
            <person name="Marziali A."/>
            <person name="Militscher J."/>
            <person name="Miranda M."/>
            <person name="Nguyen M."/>
            <person name="Nierman W.C."/>
            <person name="Osborne B.I."/>
            <person name="Pai G."/>
            <person name="Peterson J."/>
            <person name="Pham P.K."/>
            <person name="Rizzo M."/>
            <person name="Rooney T."/>
            <person name="Rowley D."/>
            <person name="Sakano H."/>
            <person name="Salzberg S.L."/>
            <person name="Schwartz J.R."/>
            <person name="Shinn P."/>
            <person name="Southwick A.M."/>
            <person name="Sun H."/>
            <person name="Tallon L.J."/>
            <person name="Tambunga G."/>
            <person name="Toriumi M.J."/>
            <person name="Town C.D."/>
            <person name="Utterback T."/>
            <person name="Van Aken S."/>
            <person name="Vaysberg M."/>
            <person name="Vysotskaia V.S."/>
            <person name="Walker M."/>
            <person name="Wu D."/>
            <person name="Yu G."/>
            <person name="Fraser C.M."/>
            <person name="Venter J.C."/>
            <person name="Davis R.W."/>
        </authorList>
    </citation>
    <scope>NUCLEOTIDE SEQUENCE [LARGE SCALE GENOMIC DNA]</scope>
    <source>
        <strain>cv. Columbia</strain>
    </source>
</reference>
<reference key="3">
    <citation type="journal article" date="2017" name="Plant J.">
        <title>Araport11: a complete reannotation of the Arabidopsis thaliana reference genome.</title>
        <authorList>
            <person name="Cheng C.Y."/>
            <person name="Krishnakumar V."/>
            <person name="Chan A.P."/>
            <person name="Thibaud-Nissen F."/>
            <person name="Schobel S."/>
            <person name="Town C.D."/>
        </authorList>
    </citation>
    <scope>GENOME REANNOTATION</scope>
    <source>
        <strain>cv. Columbia</strain>
    </source>
</reference>
<reference key="4">
    <citation type="journal article" date="2003" name="Science">
        <title>Empirical analysis of transcriptional activity in the Arabidopsis genome.</title>
        <authorList>
            <person name="Yamada K."/>
            <person name="Lim J."/>
            <person name="Dale J.M."/>
            <person name="Chen H."/>
            <person name="Shinn P."/>
            <person name="Palm C.J."/>
            <person name="Southwick A.M."/>
            <person name="Wu H.C."/>
            <person name="Kim C.J."/>
            <person name="Nguyen M."/>
            <person name="Pham P.K."/>
            <person name="Cheuk R.F."/>
            <person name="Karlin-Newmann G."/>
            <person name="Liu S.X."/>
            <person name="Lam B."/>
            <person name="Sakano H."/>
            <person name="Wu T."/>
            <person name="Yu G."/>
            <person name="Miranda M."/>
            <person name="Quach H.L."/>
            <person name="Tripp M."/>
            <person name="Chang C.H."/>
            <person name="Lee J.M."/>
            <person name="Toriumi M.J."/>
            <person name="Chan M.M."/>
            <person name="Tang C.C."/>
            <person name="Onodera C.S."/>
            <person name="Deng J.M."/>
            <person name="Akiyama K."/>
            <person name="Ansari Y."/>
            <person name="Arakawa T."/>
            <person name="Banh J."/>
            <person name="Banno F."/>
            <person name="Bowser L."/>
            <person name="Brooks S.Y."/>
            <person name="Carninci P."/>
            <person name="Chao Q."/>
            <person name="Choy N."/>
            <person name="Enju A."/>
            <person name="Goldsmith A.D."/>
            <person name="Gurjal M."/>
            <person name="Hansen N.F."/>
            <person name="Hayashizaki Y."/>
            <person name="Johnson-Hopson C."/>
            <person name="Hsuan V.W."/>
            <person name="Iida K."/>
            <person name="Karnes M."/>
            <person name="Khan S."/>
            <person name="Koesema E."/>
            <person name="Ishida J."/>
            <person name="Jiang P.X."/>
            <person name="Jones T."/>
            <person name="Kawai J."/>
            <person name="Kamiya A."/>
            <person name="Meyers C."/>
            <person name="Nakajima M."/>
            <person name="Narusaka M."/>
            <person name="Seki M."/>
            <person name="Sakurai T."/>
            <person name="Satou M."/>
            <person name="Tamse R."/>
            <person name="Vaysberg M."/>
            <person name="Wallender E.K."/>
            <person name="Wong C."/>
            <person name="Yamamura Y."/>
            <person name="Yuan S."/>
            <person name="Shinozaki K."/>
            <person name="Davis R.W."/>
            <person name="Theologis A."/>
            <person name="Ecker J.R."/>
        </authorList>
    </citation>
    <scope>NUCLEOTIDE SEQUENCE [LARGE SCALE MRNA]</scope>
    <source>
        <strain>cv. Columbia</strain>
    </source>
</reference>
<reference key="5">
    <citation type="submission" date="2002-03" db="EMBL/GenBank/DDBJ databases">
        <title>Full-length cDNA from Arabidopsis thaliana.</title>
        <authorList>
            <person name="Brover V.V."/>
            <person name="Troukhan M.E."/>
            <person name="Alexandrov N.A."/>
            <person name="Lu Y.-P."/>
            <person name="Flavell R.B."/>
            <person name="Feldmann K.A."/>
        </authorList>
    </citation>
    <scope>NUCLEOTIDE SEQUENCE [LARGE SCALE MRNA]</scope>
</reference>
<reference key="6">
    <citation type="submission" date="2005-03" db="EMBL/GenBank/DDBJ databases">
        <title>Large-scale analysis of RIKEN Arabidopsis full-length (RAFL) cDNAs.</title>
        <authorList>
            <person name="Totoki Y."/>
            <person name="Seki M."/>
            <person name="Ishida J."/>
            <person name="Nakajima M."/>
            <person name="Enju A."/>
            <person name="Kamiya A."/>
            <person name="Narusaka M."/>
            <person name="Shin-i T."/>
            <person name="Nakagawa M."/>
            <person name="Sakamoto N."/>
            <person name="Oishi K."/>
            <person name="Kohara Y."/>
            <person name="Kobayashi M."/>
            <person name="Toyoda A."/>
            <person name="Sakaki Y."/>
            <person name="Sakurai T."/>
            <person name="Iida K."/>
            <person name="Akiyama K."/>
            <person name="Satou M."/>
            <person name="Toyoda T."/>
            <person name="Konagaya A."/>
            <person name="Carninci P."/>
            <person name="Kawai J."/>
            <person name="Hayashizaki Y."/>
            <person name="Shinozaki K."/>
        </authorList>
    </citation>
    <scope>NUCLEOTIDE SEQUENCE [LARGE SCALE MRNA] OF 186-280</scope>
    <source>
        <strain>cv. Columbia</strain>
    </source>
</reference>
<reference key="7">
    <citation type="journal article" date="1998" name="Virology">
        <title>Isolation of a mutant of Arabidopsis thaliana carrying two simultaneous mutations affecting tobacco mosaic virus multiplication within a single cell.</title>
        <authorList>
            <person name="Ohshima K."/>
            <person name="Taniyama T."/>
            <person name="Yamanaka T."/>
            <person name="Ishikawa M."/>
            <person name="Naito S."/>
        </authorList>
    </citation>
    <scope>FUNCTION</scope>
    <scope>DISRUPTION PHENOTYPE</scope>
</reference>
<reference key="8">
    <citation type="journal article" date="2003" name="EMBO J.">
        <title>Subcellular localization of host and viral proteins associated with tobamovirus RNA replication.</title>
        <authorList>
            <person name="Hagiwara Y."/>
            <person name="Komoda K."/>
            <person name="Yamanaka T."/>
            <person name="Tamai A."/>
            <person name="Meshi T."/>
            <person name="Funada R."/>
            <person name="Tsuchiya T."/>
            <person name="Naito S."/>
            <person name="Ishikawa M."/>
        </authorList>
    </citation>
    <scope>SUBCELLULAR LOCATION</scope>
    <source>
        <strain>cv. Columbia</strain>
    </source>
</reference>
<reference key="9">
    <citation type="journal article" date="2008" name="J. Gen. Virol.">
        <title>Analysis of tobamovirus multiplication in Arabidopsis thaliana mutants defective in TOM2A homologues.</title>
        <authorList>
            <person name="Fujisaki K."/>
            <person name="Kobayashi S."/>
            <person name="Tsujimoto Y."/>
            <person name="Naito S."/>
            <person name="Ishikawa M."/>
        </authorList>
    </citation>
    <scope>FUNCTION</scope>
    <scope>DISRUPTION PHENOTYPE</scope>
    <scope>TISSUE SPECIFICITY</scope>
</reference>
<reference key="10">
    <citation type="journal article" date="2009" name="J. Proteomics">
        <title>Phosphoproteomic analysis of nuclei-enriched fractions from Arabidopsis thaliana.</title>
        <authorList>
            <person name="Jones A.M.E."/>
            <person name="MacLean D."/>
            <person name="Studholme D.J."/>
            <person name="Serna-Sanz A."/>
            <person name="Andreasson E."/>
            <person name="Rathjen J.P."/>
            <person name="Peck S.C."/>
        </authorList>
    </citation>
    <scope>IDENTIFICATION BY MASS SPECTROMETRY [LARGE SCALE ANALYSIS]</scope>
    <source>
        <strain>cv. Columbia</strain>
    </source>
</reference>
<reference key="11">
    <citation type="journal article" date="2009" name="Plant Physiol.">
        <title>Large-scale Arabidopsis phosphoproteome profiling reveals novel chloroplast kinase substrates and phosphorylation networks.</title>
        <authorList>
            <person name="Reiland S."/>
            <person name="Messerli G."/>
            <person name="Baerenfaller K."/>
            <person name="Gerrits B."/>
            <person name="Endler A."/>
            <person name="Grossmann J."/>
            <person name="Gruissem W."/>
            <person name="Baginsky S."/>
        </authorList>
    </citation>
    <scope>PHOSPHORYLATION [LARGE SCALE ANALYSIS] AT SER-196 AND SER-233</scope>
    <scope>IDENTIFICATION BY MASS SPECTROMETRY [LARGE SCALE ANALYSIS]</scope>
</reference>
<proteinExistence type="evidence at protein level"/>
<keyword id="KW-0472">Membrane</keyword>
<keyword id="KW-0597">Phosphoprotein</keyword>
<keyword id="KW-1185">Reference proteome</keyword>
<keyword id="KW-0812">Transmembrane</keyword>
<keyword id="KW-1133">Transmembrane helix</keyword>
<keyword id="KW-0926">Vacuole</keyword>
<organism>
    <name type="scientific">Arabidopsis thaliana</name>
    <name type="common">Mouse-ear cress</name>
    <dbReference type="NCBI Taxonomy" id="3702"/>
    <lineage>
        <taxon>Eukaryota</taxon>
        <taxon>Viridiplantae</taxon>
        <taxon>Streptophyta</taxon>
        <taxon>Embryophyta</taxon>
        <taxon>Tracheophyta</taxon>
        <taxon>Spermatophyta</taxon>
        <taxon>Magnoliopsida</taxon>
        <taxon>eudicotyledons</taxon>
        <taxon>Gunneridae</taxon>
        <taxon>Pentapetalae</taxon>
        <taxon>rosids</taxon>
        <taxon>malvids</taxon>
        <taxon>Brassicales</taxon>
        <taxon>Brassicaceae</taxon>
        <taxon>Camelineae</taxon>
        <taxon>Arabidopsis</taxon>
    </lineage>
</organism>
<feature type="chain" id="PRO_0000423674" description="Tobamovirus multiplication protein 2A">
    <location>
        <begin position="1"/>
        <end position="280"/>
    </location>
</feature>
<feature type="topological domain" description="Cytoplasmic" evidence="1">
    <location>
        <begin position="1"/>
        <end position="13"/>
    </location>
</feature>
<feature type="transmembrane region" description="Helical" evidence="1">
    <location>
        <begin position="14"/>
        <end position="34"/>
    </location>
</feature>
<feature type="topological domain" description="Extracellular" evidence="1">
    <location>
        <begin position="35"/>
        <end position="78"/>
    </location>
</feature>
<feature type="transmembrane region" description="Helical" evidence="1">
    <location>
        <begin position="79"/>
        <end position="99"/>
    </location>
</feature>
<feature type="topological domain" description="Cytoplasmic" evidence="1">
    <location>
        <begin position="100"/>
        <end position="113"/>
    </location>
</feature>
<feature type="transmembrane region" description="Helical" evidence="1">
    <location>
        <begin position="114"/>
        <end position="134"/>
    </location>
</feature>
<feature type="topological domain" description="Extracellular" evidence="1">
    <location>
        <begin position="135"/>
        <end position="162"/>
    </location>
</feature>
<feature type="transmembrane region" description="Helical" evidence="1">
    <location>
        <begin position="163"/>
        <end position="183"/>
    </location>
</feature>
<feature type="topological domain" description="Cytoplasmic" evidence="1">
    <location>
        <begin position="184"/>
        <end position="280"/>
    </location>
</feature>
<feature type="region of interest" description="Disordered" evidence="2">
    <location>
        <begin position="258"/>
        <end position="280"/>
    </location>
</feature>
<feature type="compositionally biased region" description="Basic and acidic residues" evidence="2">
    <location>
        <begin position="271"/>
        <end position="280"/>
    </location>
</feature>
<feature type="modified residue" description="Phosphoserine" evidence="8">
    <location>
        <position position="196"/>
    </location>
</feature>
<feature type="modified residue" description="Phosphoserine" evidence="8">
    <location>
        <position position="233"/>
    </location>
</feature>
<protein>
    <recommendedName>
        <fullName>Tobamovirus multiplication protein 2A</fullName>
        <shortName>AtTOM2A</shortName>
    </recommendedName>
</protein>
<sequence length="280" mass="31556">MACRGCLECLLKLLNFLLAVAGLGMIGYGIYLFVEYKRVTDNSVTFDLTNGDQSYVSFGRPILMAVSLSSNIFDNLPKAWFIYLFIGIGVALFVISCCGCVGTCSRSVCCLSCYSLLLILLILVELGFAAFIFFDNSWRDELPSDRTGNFDTIYNFLRENWKIVRWVALGAVVFEALLFLLALMVRAANTPAEYDSDDEYLAPRQQIRQPFINRQAAPVTGVPVAPTLDQRPSRSDPWSARMREKYGLDTSEFTYNPSESHRFQQMPAQPNEEKGRCTIM</sequence>
<evidence type="ECO:0000255" key="1"/>
<evidence type="ECO:0000256" key="2">
    <source>
        <dbReference type="SAM" id="MobiDB-lite"/>
    </source>
</evidence>
<evidence type="ECO:0000269" key="3">
    <source>
    </source>
</evidence>
<evidence type="ECO:0000269" key="4">
    <source>
    </source>
</evidence>
<evidence type="ECO:0000269" key="5">
    <source>
    </source>
</evidence>
<evidence type="ECO:0000269" key="6">
    <source>
    </source>
</evidence>
<evidence type="ECO:0000305" key="7"/>
<evidence type="ECO:0007744" key="8">
    <source>
    </source>
</evidence>